<protein>
    <recommendedName>
        <fullName evidence="1">Small ribosomal subunit protein uS9</fullName>
    </recommendedName>
    <alternativeName>
        <fullName evidence="2">30S ribosomal protein S9</fullName>
    </alternativeName>
</protein>
<proteinExistence type="inferred from homology"/>
<keyword id="KW-0687">Ribonucleoprotein</keyword>
<keyword id="KW-0689">Ribosomal protein</keyword>
<reference key="1">
    <citation type="journal article" date="2008" name="Genomics">
        <title>Characterization of ST-4821 complex, a unique Neisseria meningitidis clone.</title>
        <authorList>
            <person name="Peng J."/>
            <person name="Yang L."/>
            <person name="Yang F."/>
            <person name="Yang J."/>
            <person name="Yan Y."/>
            <person name="Nie H."/>
            <person name="Zhang X."/>
            <person name="Xiong Z."/>
            <person name="Jiang Y."/>
            <person name="Cheng F."/>
            <person name="Xu X."/>
            <person name="Chen S."/>
            <person name="Sun L."/>
            <person name="Li W."/>
            <person name="Shen Y."/>
            <person name="Shao Z."/>
            <person name="Liang X."/>
            <person name="Xu J."/>
            <person name="Jin Q."/>
        </authorList>
    </citation>
    <scope>NUCLEOTIDE SEQUENCE [LARGE SCALE GENOMIC DNA]</scope>
    <source>
        <strain>053442</strain>
    </source>
</reference>
<gene>
    <name evidence="1" type="primary">rpsI</name>
    <name type="ordered locus">NMCC_0130</name>
</gene>
<accession>A9M088</accession>
<sequence>MNGKYYYGTGRRKSSVARVFLIKGTGQIIVNGRPVDEFFARETSRMVVRQPLVLTENAESFDIKVNVVGGGETGQSGAIRHGITRALIDFDAALKPALSQAGFVTRDAREVERKKPGLRKARRAKQFSKR</sequence>
<evidence type="ECO:0000255" key="1">
    <source>
        <dbReference type="HAMAP-Rule" id="MF_00532"/>
    </source>
</evidence>
<evidence type="ECO:0000305" key="2"/>
<comment type="similarity">
    <text evidence="1">Belongs to the universal ribosomal protein uS9 family.</text>
</comment>
<dbReference type="EMBL" id="CP000381">
    <property type="protein sequence ID" value="ABX72349.1"/>
    <property type="molecule type" value="Genomic_DNA"/>
</dbReference>
<dbReference type="RefSeq" id="WP_002215008.1">
    <property type="nucleotide sequence ID" value="NC_010120.1"/>
</dbReference>
<dbReference type="SMR" id="A9M088"/>
<dbReference type="GeneID" id="93386983"/>
<dbReference type="KEGG" id="nmn:NMCC_0130"/>
<dbReference type="HOGENOM" id="CLU_046483_2_1_4"/>
<dbReference type="Proteomes" id="UP000001177">
    <property type="component" value="Chromosome"/>
</dbReference>
<dbReference type="GO" id="GO:0022627">
    <property type="term" value="C:cytosolic small ribosomal subunit"/>
    <property type="evidence" value="ECO:0007669"/>
    <property type="project" value="TreeGrafter"/>
</dbReference>
<dbReference type="GO" id="GO:0003723">
    <property type="term" value="F:RNA binding"/>
    <property type="evidence" value="ECO:0007669"/>
    <property type="project" value="TreeGrafter"/>
</dbReference>
<dbReference type="GO" id="GO:0003735">
    <property type="term" value="F:structural constituent of ribosome"/>
    <property type="evidence" value="ECO:0007669"/>
    <property type="project" value="InterPro"/>
</dbReference>
<dbReference type="GO" id="GO:0006412">
    <property type="term" value="P:translation"/>
    <property type="evidence" value="ECO:0007669"/>
    <property type="project" value="UniProtKB-UniRule"/>
</dbReference>
<dbReference type="FunFam" id="3.30.230.10:FF:000001">
    <property type="entry name" value="30S ribosomal protein S9"/>
    <property type="match status" value="1"/>
</dbReference>
<dbReference type="Gene3D" id="3.30.230.10">
    <property type="match status" value="1"/>
</dbReference>
<dbReference type="HAMAP" id="MF_00532_B">
    <property type="entry name" value="Ribosomal_uS9_B"/>
    <property type="match status" value="1"/>
</dbReference>
<dbReference type="InterPro" id="IPR020568">
    <property type="entry name" value="Ribosomal_Su5_D2-typ_SF"/>
</dbReference>
<dbReference type="InterPro" id="IPR000754">
    <property type="entry name" value="Ribosomal_uS9"/>
</dbReference>
<dbReference type="InterPro" id="IPR023035">
    <property type="entry name" value="Ribosomal_uS9_bac/plastid"/>
</dbReference>
<dbReference type="InterPro" id="IPR020574">
    <property type="entry name" value="Ribosomal_uS9_CS"/>
</dbReference>
<dbReference type="InterPro" id="IPR014721">
    <property type="entry name" value="Ribsml_uS5_D2-typ_fold_subgr"/>
</dbReference>
<dbReference type="NCBIfam" id="NF001099">
    <property type="entry name" value="PRK00132.1"/>
    <property type="match status" value="1"/>
</dbReference>
<dbReference type="PANTHER" id="PTHR21569">
    <property type="entry name" value="RIBOSOMAL PROTEIN S9"/>
    <property type="match status" value="1"/>
</dbReference>
<dbReference type="PANTHER" id="PTHR21569:SF1">
    <property type="entry name" value="SMALL RIBOSOMAL SUBUNIT PROTEIN US9M"/>
    <property type="match status" value="1"/>
</dbReference>
<dbReference type="Pfam" id="PF00380">
    <property type="entry name" value="Ribosomal_S9"/>
    <property type="match status" value="1"/>
</dbReference>
<dbReference type="SUPFAM" id="SSF54211">
    <property type="entry name" value="Ribosomal protein S5 domain 2-like"/>
    <property type="match status" value="1"/>
</dbReference>
<dbReference type="PROSITE" id="PS00360">
    <property type="entry name" value="RIBOSOMAL_S9"/>
    <property type="match status" value="1"/>
</dbReference>
<feature type="chain" id="PRO_1000081823" description="Small ribosomal subunit protein uS9">
    <location>
        <begin position="1"/>
        <end position="130"/>
    </location>
</feature>
<name>RS9_NEIM0</name>
<organism>
    <name type="scientific">Neisseria meningitidis serogroup C (strain 053442)</name>
    <dbReference type="NCBI Taxonomy" id="374833"/>
    <lineage>
        <taxon>Bacteria</taxon>
        <taxon>Pseudomonadati</taxon>
        <taxon>Pseudomonadota</taxon>
        <taxon>Betaproteobacteria</taxon>
        <taxon>Neisseriales</taxon>
        <taxon>Neisseriaceae</taxon>
        <taxon>Neisseria</taxon>
    </lineage>
</organism>